<name>CMOA_ERWT9</name>
<dbReference type="EC" id="2.1.3.-" evidence="1"/>
<dbReference type="EMBL" id="CU468135">
    <property type="protein sequence ID" value="CAO96527.1"/>
    <property type="molecule type" value="Genomic_DNA"/>
</dbReference>
<dbReference type="RefSeq" id="WP_012441221.1">
    <property type="nucleotide sequence ID" value="NC_010694.1"/>
</dbReference>
<dbReference type="SMR" id="B2VJC2"/>
<dbReference type="STRING" id="465817.ETA_14810"/>
<dbReference type="KEGG" id="eta:ETA_14810"/>
<dbReference type="eggNOG" id="COG2226">
    <property type="taxonomic scope" value="Bacteria"/>
</dbReference>
<dbReference type="HOGENOM" id="CLU_078475_0_0_6"/>
<dbReference type="OrthoDB" id="9779941at2"/>
<dbReference type="Proteomes" id="UP000001726">
    <property type="component" value="Chromosome"/>
</dbReference>
<dbReference type="GO" id="GO:0016743">
    <property type="term" value="F:carboxyl- or carbamoyltransferase activity"/>
    <property type="evidence" value="ECO:0007669"/>
    <property type="project" value="UniProtKB-UniRule"/>
</dbReference>
<dbReference type="GO" id="GO:1904047">
    <property type="term" value="F:S-adenosyl-L-methionine binding"/>
    <property type="evidence" value="ECO:0007669"/>
    <property type="project" value="UniProtKB-UniRule"/>
</dbReference>
<dbReference type="GO" id="GO:0002098">
    <property type="term" value="P:tRNA wobble uridine modification"/>
    <property type="evidence" value="ECO:0007669"/>
    <property type="project" value="InterPro"/>
</dbReference>
<dbReference type="CDD" id="cd02440">
    <property type="entry name" value="AdoMet_MTases"/>
    <property type="match status" value="1"/>
</dbReference>
<dbReference type="Gene3D" id="3.40.50.150">
    <property type="entry name" value="Vaccinia Virus protein VP39"/>
    <property type="match status" value="1"/>
</dbReference>
<dbReference type="HAMAP" id="MF_01589">
    <property type="entry name" value="Cx_SAM_synthase"/>
    <property type="match status" value="1"/>
</dbReference>
<dbReference type="InterPro" id="IPR005271">
    <property type="entry name" value="CmoA"/>
</dbReference>
<dbReference type="InterPro" id="IPR041698">
    <property type="entry name" value="Methyltransf_25"/>
</dbReference>
<dbReference type="InterPro" id="IPR029063">
    <property type="entry name" value="SAM-dependent_MTases_sf"/>
</dbReference>
<dbReference type="NCBIfam" id="TIGR00740">
    <property type="entry name" value="carboxy-S-adenosyl-L-methionine synthase CmoA"/>
    <property type="match status" value="1"/>
</dbReference>
<dbReference type="NCBIfam" id="NF011995">
    <property type="entry name" value="PRK15451.1"/>
    <property type="match status" value="1"/>
</dbReference>
<dbReference type="PANTHER" id="PTHR43861:SF2">
    <property type="entry name" value="CARBOXY-S-ADENOSYL-L-METHIONINE SYNTHASE"/>
    <property type="match status" value="1"/>
</dbReference>
<dbReference type="PANTHER" id="PTHR43861">
    <property type="entry name" value="TRANS-ACONITATE 2-METHYLTRANSFERASE-RELATED"/>
    <property type="match status" value="1"/>
</dbReference>
<dbReference type="Pfam" id="PF13649">
    <property type="entry name" value="Methyltransf_25"/>
    <property type="match status" value="1"/>
</dbReference>
<dbReference type="PIRSF" id="PIRSF006325">
    <property type="entry name" value="MeTrfase_bac"/>
    <property type="match status" value="1"/>
</dbReference>
<dbReference type="SUPFAM" id="SSF53335">
    <property type="entry name" value="S-adenosyl-L-methionine-dependent methyltransferases"/>
    <property type="match status" value="1"/>
</dbReference>
<accession>B2VJC2</accession>
<sequence length="246" mass="27737">MSNRDTLFSTPVANLGDWTFDERVAEVFPDMIQRSVPGYANIISMIGMLAERFVQEDSQVYDLGCSLGAATLSVRRNIKASGCRIIAVDNSPAMVERCRRHIDAFRADTPVEVIEADIRRVPIENASLVVLNFTLQFLRPEERQQLLNTIWQGLKPGGALVLSEKFSFNDADVGELLFNMHHDFKRANGYSELEISQKRSMLENVMLTDSVETHKQRLKLAGFQHAELWFQCFNFGSLVALKAGHA</sequence>
<protein>
    <recommendedName>
        <fullName evidence="1">Carboxy-S-adenosyl-L-methionine synthase</fullName>
        <shortName evidence="1">Cx-SAM synthase</shortName>
        <ecNumber evidence="1">2.1.3.-</ecNumber>
    </recommendedName>
</protein>
<keyword id="KW-1185">Reference proteome</keyword>
<keyword id="KW-0949">S-adenosyl-L-methionine</keyword>
<keyword id="KW-0808">Transferase</keyword>
<feature type="chain" id="PRO_1000201345" description="Carboxy-S-adenosyl-L-methionine synthase">
    <location>
        <begin position="1"/>
        <end position="246"/>
    </location>
</feature>
<feature type="binding site" evidence="1">
    <location>
        <position position="39"/>
    </location>
    <ligand>
        <name>S-adenosyl-L-methionine</name>
        <dbReference type="ChEBI" id="CHEBI:59789"/>
    </ligand>
</feature>
<feature type="binding site" evidence="1">
    <location>
        <begin position="64"/>
        <end position="66"/>
    </location>
    <ligand>
        <name>S-adenosyl-L-methionine</name>
        <dbReference type="ChEBI" id="CHEBI:59789"/>
    </ligand>
</feature>
<feature type="binding site" evidence="1">
    <location>
        <begin position="89"/>
        <end position="90"/>
    </location>
    <ligand>
        <name>S-adenosyl-L-methionine</name>
        <dbReference type="ChEBI" id="CHEBI:59789"/>
    </ligand>
</feature>
<feature type="binding site" evidence="1">
    <location>
        <begin position="117"/>
        <end position="118"/>
    </location>
    <ligand>
        <name>S-adenosyl-L-methionine</name>
        <dbReference type="ChEBI" id="CHEBI:59789"/>
    </ligand>
</feature>
<feature type="binding site" evidence="1">
    <location>
        <position position="132"/>
    </location>
    <ligand>
        <name>S-adenosyl-L-methionine</name>
        <dbReference type="ChEBI" id="CHEBI:59789"/>
    </ligand>
</feature>
<feature type="binding site" evidence="1">
    <location>
        <position position="199"/>
    </location>
    <ligand>
        <name>S-adenosyl-L-methionine</name>
        <dbReference type="ChEBI" id="CHEBI:59789"/>
    </ligand>
</feature>
<evidence type="ECO:0000255" key="1">
    <source>
        <dbReference type="HAMAP-Rule" id="MF_01589"/>
    </source>
</evidence>
<gene>
    <name evidence="1" type="primary">cmoA</name>
    <name type="ordered locus">ETA_14810</name>
</gene>
<proteinExistence type="inferred from homology"/>
<reference key="1">
    <citation type="journal article" date="2008" name="Environ. Microbiol.">
        <title>The genome of Erwinia tasmaniensis strain Et1/99, a non-pathogenic bacterium in the genus Erwinia.</title>
        <authorList>
            <person name="Kube M."/>
            <person name="Migdoll A.M."/>
            <person name="Mueller I."/>
            <person name="Kuhl H."/>
            <person name="Beck A."/>
            <person name="Reinhardt R."/>
            <person name="Geider K."/>
        </authorList>
    </citation>
    <scope>NUCLEOTIDE SEQUENCE [LARGE SCALE GENOMIC DNA]</scope>
    <source>
        <strain>DSM 17950 / CFBP 7177 / CIP 109463 / NCPPB 4357 / Et1/99</strain>
    </source>
</reference>
<comment type="function">
    <text evidence="1">Catalyzes the conversion of S-adenosyl-L-methionine (SAM) to carboxy-S-adenosyl-L-methionine (Cx-SAM).</text>
</comment>
<comment type="catalytic activity">
    <reaction evidence="1">
        <text>prephenate + S-adenosyl-L-methionine = carboxy-S-adenosyl-L-methionine + 3-phenylpyruvate + H2O</text>
        <dbReference type="Rhea" id="RHEA:51692"/>
        <dbReference type="ChEBI" id="CHEBI:15377"/>
        <dbReference type="ChEBI" id="CHEBI:18005"/>
        <dbReference type="ChEBI" id="CHEBI:29934"/>
        <dbReference type="ChEBI" id="CHEBI:59789"/>
        <dbReference type="ChEBI" id="CHEBI:134278"/>
    </reaction>
</comment>
<comment type="subunit">
    <text evidence="1">Homodimer.</text>
</comment>
<comment type="similarity">
    <text evidence="1">Belongs to the class I-like SAM-binding methyltransferase superfamily. Cx-SAM synthase family.</text>
</comment>
<organism>
    <name type="scientific">Erwinia tasmaniensis (strain DSM 17950 / CFBP 7177 / CIP 109463 / NCPPB 4357 / Et1/99)</name>
    <dbReference type="NCBI Taxonomy" id="465817"/>
    <lineage>
        <taxon>Bacteria</taxon>
        <taxon>Pseudomonadati</taxon>
        <taxon>Pseudomonadota</taxon>
        <taxon>Gammaproteobacteria</taxon>
        <taxon>Enterobacterales</taxon>
        <taxon>Erwiniaceae</taxon>
        <taxon>Erwinia</taxon>
    </lineage>
</organism>